<proteinExistence type="evidence at protein level"/>
<sequence>MSSKRRQALRDFYNLPGSNSSSSTVSTTRKPSSSNTVSPVEETALDKVDPEFSDPNFDSNAYVSKFMEKATPAELLQRDKSLVASIQGLSVDHRSLVYNHYKHLLEASDAINSFCKNLNTLLPALNDAYQACPKPTRKNGNNDTYSAPQSFNGNEFSAP</sequence>
<comment type="function">
    <text evidence="1">Involved in retrograde transport from early and late endosomes to late Golgi, leading to the membrane fusion between late Golgi and endosomal vesicles.</text>
</comment>
<comment type="subunit">
    <text evidence="1">Component of the Golgi-associated retrograde protein (GARP) complex.</text>
</comment>
<comment type="subcellular location">
    <subcellularLocation>
        <location evidence="3">Cytoplasm</location>
    </subcellularLocation>
    <subcellularLocation>
        <location evidence="3">Nucleus</location>
    </subcellularLocation>
    <subcellularLocation>
        <location evidence="1">Golgi apparatus</location>
        <location evidence="1">trans-Golgi network membrane</location>
        <topology evidence="1">Peripheral membrane protein</topology>
    </subcellularLocation>
    <subcellularLocation>
        <location evidence="1">Endosome membrane</location>
        <topology evidence="1">Peripheral membrane protein</topology>
    </subcellularLocation>
</comment>
<comment type="similarity">
    <text evidence="5">Belongs to the VPS51 family.</text>
</comment>
<name>VPS51_SCHPO</name>
<keyword id="KW-0963">Cytoplasm</keyword>
<keyword id="KW-0967">Endosome</keyword>
<keyword id="KW-0333">Golgi apparatus</keyword>
<keyword id="KW-0472">Membrane</keyword>
<keyword id="KW-0539">Nucleus</keyword>
<keyword id="KW-0597">Phosphoprotein</keyword>
<keyword id="KW-0653">Protein transport</keyword>
<keyword id="KW-1185">Reference proteome</keyword>
<keyword id="KW-0813">Transport</keyword>
<accession>O14146</accession>
<reference key="1">
    <citation type="journal article" date="2002" name="Nature">
        <title>The genome sequence of Schizosaccharomyces pombe.</title>
        <authorList>
            <person name="Wood V."/>
            <person name="Gwilliam R."/>
            <person name="Rajandream M.A."/>
            <person name="Lyne M.H."/>
            <person name="Lyne R."/>
            <person name="Stewart A."/>
            <person name="Sgouros J.G."/>
            <person name="Peat N."/>
            <person name="Hayles J."/>
            <person name="Baker S.G."/>
            <person name="Basham D."/>
            <person name="Bowman S."/>
            <person name="Brooks K."/>
            <person name="Brown D."/>
            <person name="Brown S."/>
            <person name="Chillingworth T."/>
            <person name="Churcher C.M."/>
            <person name="Collins M."/>
            <person name="Connor R."/>
            <person name="Cronin A."/>
            <person name="Davis P."/>
            <person name="Feltwell T."/>
            <person name="Fraser A."/>
            <person name="Gentles S."/>
            <person name="Goble A."/>
            <person name="Hamlin N."/>
            <person name="Harris D.E."/>
            <person name="Hidalgo J."/>
            <person name="Hodgson G."/>
            <person name="Holroyd S."/>
            <person name="Hornsby T."/>
            <person name="Howarth S."/>
            <person name="Huckle E.J."/>
            <person name="Hunt S."/>
            <person name="Jagels K."/>
            <person name="James K.D."/>
            <person name="Jones L."/>
            <person name="Jones M."/>
            <person name="Leather S."/>
            <person name="McDonald S."/>
            <person name="McLean J."/>
            <person name="Mooney P."/>
            <person name="Moule S."/>
            <person name="Mungall K.L."/>
            <person name="Murphy L.D."/>
            <person name="Niblett D."/>
            <person name="Odell C."/>
            <person name="Oliver K."/>
            <person name="O'Neil S."/>
            <person name="Pearson D."/>
            <person name="Quail M.A."/>
            <person name="Rabbinowitsch E."/>
            <person name="Rutherford K.M."/>
            <person name="Rutter S."/>
            <person name="Saunders D."/>
            <person name="Seeger K."/>
            <person name="Sharp S."/>
            <person name="Skelton J."/>
            <person name="Simmonds M.N."/>
            <person name="Squares R."/>
            <person name="Squares S."/>
            <person name="Stevens K."/>
            <person name="Taylor K."/>
            <person name="Taylor R.G."/>
            <person name="Tivey A."/>
            <person name="Walsh S.V."/>
            <person name="Warren T."/>
            <person name="Whitehead S."/>
            <person name="Woodward J.R."/>
            <person name="Volckaert G."/>
            <person name="Aert R."/>
            <person name="Robben J."/>
            <person name="Grymonprez B."/>
            <person name="Weltjens I."/>
            <person name="Vanstreels E."/>
            <person name="Rieger M."/>
            <person name="Schaefer M."/>
            <person name="Mueller-Auer S."/>
            <person name="Gabel C."/>
            <person name="Fuchs M."/>
            <person name="Duesterhoeft A."/>
            <person name="Fritzc C."/>
            <person name="Holzer E."/>
            <person name="Moestl D."/>
            <person name="Hilbert H."/>
            <person name="Borzym K."/>
            <person name="Langer I."/>
            <person name="Beck A."/>
            <person name="Lehrach H."/>
            <person name="Reinhardt R."/>
            <person name="Pohl T.M."/>
            <person name="Eger P."/>
            <person name="Zimmermann W."/>
            <person name="Wedler H."/>
            <person name="Wambutt R."/>
            <person name="Purnelle B."/>
            <person name="Goffeau A."/>
            <person name="Cadieu E."/>
            <person name="Dreano S."/>
            <person name="Gloux S."/>
            <person name="Lelaure V."/>
            <person name="Mottier S."/>
            <person name="Galibert F."/>
            <person name="Aves S.J."/>
            <person name="Xiang Z."/>
            <person name="Hunt C."/>
            <person name="Moore K."/>
            <person name="Hurst S.M."/>
            <person name="Lucas M."/>
            <person name="Rochet M."/>
            <person name="Gaillardin C."/>
            <person name="Tallada V.A."/>
            <person name="Garzon A."/>
            <person name="Thode G."/>
            <person name="Daga R.R."/>
            <person name="Cruzado L."/>
            <person name="Jimenez J."/>
            <person name="Sanchez M."/>
            <person name="del Rey F."/>
            <person name="Benito J."/>
            <person name="Dominguez A."/>
            <person name="Revuelta J.L."/>
            <person name="Moreno S."/>
            <person name="Armstrong J."/>
            <person name="Forsburg S.L."/>
            <person name="Cerutti L."/>
            <person name="Lowe T."/>
            <person name="McCombie W.R."/>
            <person name="Paulsen I."/>
            <person name="Potashkin J."/>
            <person name="Shpakovski G.V."/>
            <person name="Ussery D."/>
            <person name="Barrell B.G."/>
            <person name="Nurse P."/>
        </authorList>
    </citation>
    <scope>NUCLEOTIDE SEQUENCE [LARGE SCALE GENOMIC DNA]</scope>
    <source>
        <strain>972 / ATCC 24843</strain>
    </source>
</reference>
<reference key="2">
    <citation type="journal article" date="2006" name="Nat. Biotechnol.">
        <title>ORFeome cloning and global analysis of protein localization in the fission yeast Schizosaccharomyces pombe.</title>
        <authorList>
            <person name="Matsuyama A."/>
            <person name="Arai R."/>
            <person name="Yashiroda Y."/>
            <person name="Shirai A."/>
            <person name="Kamata A."/>
            <person name="Sekido S."/>
            <person name="Kobayashi Y."/>
            <person name="Hashimoto A."/>
            <person name="Hamamoto M."/>
            <person name="Hiraoka Y."/>
            <person name="Horinouchi S."/>
            <person name="Yoshida M."/>
        </authorList>
    </citation>
    <scope>SUBCELLULAR LOCATION [LARGE SCALE ANALYSIS]</scope>
</reference>
<reference key="3">
    <citation type="journal article" date="2008" name="J. Proteome Res.">
        <title>Phosphoproteome analysis of fission yeast.</title>
        <authorList>
            <person name="Wilson-Grady J.T."/>
            <person name="Villen J."/>
            <person name="Gygi S.P."/>
        </authorList>
    </citation>
    <scope>PHOSPHORYLATION [LARGE SCALE ANALYSIS] AT SER-18 AND SER-21</scope>
    <scope>IDENTIFICATION BY MASS SPECTROMETRY</scope>
</reference>
<dbReference type="EMBL" id="CU329670">
    <property type="protein sequence ID" value="CAB16286.1"/>
    <property type="molecule type" value="Genomic_DNA"/>
</dbReference>
<dbReference type="PIR" id="T38729">
    <property type="entry name" value="T38729"/>
</dbReference>
<dbReference type="RefSeq" id="NP_594976.1">
    <property type="nucleotide sequence ID" value="NM_001020407.2"/>
</dbReference>
<dbReference type="SMR" id="O14146"/>
<dbReference type="STRING" id="284812.O14146"/>
<dbReference type="iPTMnet" id="O14146"/>
<dbReference type="PaxDb" id="4896-SPAC3G6.10c.1"/>
<dbReference type="EnsemblFungi" id="SPAC3G6.10c.1">
    <property type="protein sequence ID" value="SPAC3G6.10c.1:pep"/>
    <property type="gene ID" value="SPAC3G6.10c"/>
</dbReference>
<dbReference type="GeneID" id="2543127"/>
<dbReference type="KEGG" id="spo:2543127"/>
<dbReference type="PomBase" id="SPAC3G6.10c">
    <property type="gene designation" value="vps51"/>
</dbReference>
<dbReference type="VEuPathDB" id="FungiDB:SPAC3G6.10c"/>
<dbReference type="eggNOG" id="KOG2346">
    <property type="taxonomic scope" value="Eukaryota"/>
</dbReference>
<dbReference type="HOGENOM" id="CLU_140523_0_0_1"/>
<dbReference type="InParanoid" id="O14146"/>
<dbReference type="OMA" id="VYNHYTH"/>
<dbReference type="PhylomeDB" id="O14146"/>
<dbReference type="PRO" id="PR:O14146"/>
<dbReference type="Proteomes" id="UP000002485">
    <property type="component" value="Chromosome I"/>
</dbReference>
<dbReference type="GO" id="GO:0005829">
    <property type="term" value="C:cytosol"/>
    <property type="evidence" value="ECO:0007005"/>
    <property type="project" value="PomBase"/>
</dbReference>
<dbReference type="GO" id="GO:0010008">
    <property type="term" value="C:endosome membrane"/>
    <property type="evidence" value="ECO:0007669"/>
    <property type="project" value="UniProtKB-SubCell"/>
</dbReference>
<dbReference type="GO" id="GO:0000938">
    <property type="term" value="C:GARP complex"/>
    <property type="evidence" value="ECO:0000266"/>
    <property type="project" value="PomBase"/>
</dbReference>
<dbReference type="GO" id="GO:0005634">
    <property type="term" value="C:nucleus"/>
    <property type="evidence" value="ECO:0007005"/>
    <property type="project" value="PomBase"/>
</dbReference>
<dbReference type="GO" id="GO:0006896">
    <property type="term" value="P:Golgi to vacuole transport"/>
    <property type="evidence" value="ECO:0000305"/>
    <property type="project" value="PomBase"/>
</dbReference>
<dbReference type="GO" id="GO:0015031">
    <property type="term" value="P:protein transport"/>
    <property type="evidence" value="ECO:0007669"/>
    <property type="project" value="UniProtKB-KW"/>
</dbReference>
<dbReference type="GO" id="GO:0042147">
    <property type="term" value="P:retrograde transport, endosome to Golgi"/>
    <property type="evidence" value="ECO:0000266"/>
    <property type="project" value="PomBase"/>
</dbReference>
<dbReference type="InterPro" id="IPR014812">
    <property type="entry name" value="Vps51"/>
</dbReference>
<dbReference type="PANTHER" id="PTHR15954">
    <property type="entry name" value="VACUOLAR PROTEIN SORTING-ASSOCIATED PROTEIN 51 HOMOLOG"/>
    <property type="match status" value="1"/>
</dbReference>
<dbReference type="PANTHER" id="PTHR15954:SF4">
    <property type="entry name" value="VACUOLAR PROTEIN SORTING-ASSOCIATED PROTEIN 51 HOMOLOG"/>
    <property type="match status" value="1"/>
</dbReference>
<dbReference type="Pfam" id="PF08700">
    <property type="entry name" value="VPS51_Exo84_N"/>
    <property type="match status" value="1"/>
</dbReference>
<gene>
    <name type="primary">vps51</name>
    <name type="ORF">SPAC3G6.10c</name>
</gene>
<feature type="chain" id="PRO_0000304066" description="Vacuolar protein sorting-associated protein 51">
    <location>
        <begin position="1"/>
        <end position="159"/>
    </location>
</feature>
<feature type="region of interest" description="Disordered" evidence="2">
    <location>
        <begin position="1"/>
        <end position="51"/>
    </location>
</feature>
<feature type="region of interest" description="Disordered" evidence="2">
    <location>
        <begin position="133"/>
        <end position="159"/>
    </location>
</feature>
<feature type="compositionally biased region" description="Low complexity" evidence="2">
    <location>
        <begin position="18"/>
        <end position="34"/>
    </location>
</feature>
<feature type="compositionally biased region" description="Polar residues" evidence="2">
    <location>
        <begin position="138"/>
        <end position="159"/>
    </location>
</feature>
<feature type="modified residue" description="Phosphoserine" evidence="4">
    <location>
        <position position="18"/>
    </location>
</feature>
<feature type="modified residue" description="Phosphoserine" evidence="4">
    <location>
        <position position="21"/>
    </location>
</feature>
<protein>
    <recommendedName>
        <fullName>Vacuolar protein sorting-associated protein 51</fullName>
    </recommendedName>
    <alternativeName>
        <fullName>GARP complex subunit vps51</fullName>
    </alternativeName>
</protein>
<evidence type="ECO:0000250" key="1"/>
<evidence type="ECO:0000256" key="2">
    <source>
        <dbReference type="SAM" id="MobiDB-lite"/>
    </source>
</evidence>
<evidence type="ECO:0000269" key="3">
    <source>
    </source>
</evidence>
<evidence type="ECO:0000269" key="4">
    <source>
    </source>
</evidence>
<evidence type="ECO:0000305" key="5"/>
<organism>
    <name type="scientific">Schizosaccharomyces pombe (strain 972 / ATCC 24843)</name>
    <name type="common">Fission yeast</name>
    <dbReference type="NCBI Taxonomy" id="284812"/>
    <lineage>
        <taxon>Eukaryota</taxon>
        <taxon>Fungi</taxon>
        <taxon>Dikarya</taxon>
        <taxon>Ascomycota</taxon>
        <taxon>Taphrinomycotina</taxon>
        <taxon>Schizosaccharomycetes</taxon>
        <taxon>Schizosaccharomycetales</taxon>
        <taxon>Schizosaccharomycetaceae</taxon>
        <taxon>Schizosaccharomyces</taxon>
    </lineage>
</organism>